<evidence type="ECO:0000255" key="1">
    <source>
        <dbReference type="HAMAP-Rule" id="MF_00120"/>
    </source>
</evidence>
<protein>
    <recommendedName>
        <fullName evidence="1">Glutamyl-tRNA(Gln) amidotransferase subunit A</fullName>
        <shortName evidence="1">Glu-ADT subunit A</shortName>
        <ecNumber evidence="1">6.3.5.7</ecNumber>
    </recommendedName>
</protein>
<accession>Q3JZM1</accession>
<dbReference type="EC" id="6.3.5.7" evidence="1"/>
<dbReference type="EMBL" id="CP000114">
    <property type="protein sequence ID" value="ABA45198.1"/>
    <property type="molecule type" value="Genomic_DNA"/>
</dbReference>
<dbReference type="RefSeq" id="WP_000009529.1">
    <property type="nucleotide sequence ID" value="NC_007432.1"/>
</dbReference>
<dbReference type="SMR" id="Q3JZM1"/>
<dbReference type="GeneID" id="66886514"/>
<dbReference type="KEGG" id="sak:SAK_1680"/>
<dbReference type="HOGENOM" id="CLU_009600_0_3_9"/>
<dbReference type="GO" id="GO:0030956">
    <property type="term" value="C:glutamyl-tRNA(Gln) amidotransferase complex"/>
    <property type="evidence" value="ECO:0007669"/>
    <property type="project" value="InterPro"/>
</dbReference>
<dbReference type="GO" id="GO:0005524">
    <property type="term" value="F:ATP binding"/>
    <property type="evidence" value="ECO:0007669"/>
    <property type="project" value="UniProtKB-KW"/>
</dbReference>
<dbReference type="GO" id="GO:0050567">
    <property type="term" value="F:glutaminyl-tRNA synthase (glutamine-hydrolyzing) activity"/>
    <property type="evidence" value="ECO:0007669"/>
    <property type="project" value="UniProtKB-UniRule"/>
</dbReference>
<dbReference type="GO" id="GO:0006412">
    <property type="term" value="P:translation"/>
    <property type="evidence" value="ECO:0007669"/>
    <property type="project" value="UniProtKB-UniRule"/>
</dbReference>
<dbReference type="Gene3D" id="3.90.1300.10">
    <property type="entry name" value="Amidase signature (AS) domain"/>
    <property type="match status" value="1"/>
</dbReference>
<dbReference type="HAMAP" id="MF_00120">
    <property type="entry name" value="GatA"/>
    <property type="match status" value="1"/>
</dbReference>
<dbReference type="InterPro" id="IPR000120">
    <property type="entry name" value="Amidase"/>
</dbReference>
<dbReference type="InterPro" id="IPR020556">
    <property type="entry name" value="Amidase_CS"/>
</dbReference>
<dbReference type="InterPro" id="IPR023631">
    <property type="entry name" value="Amidase_dom"/>
</dbReference>
<dbReference type="InterPro" id="IPR036928">
    <property type="entry name" value="AS_sf"/>
</dbReference>
<dbReference type="InterPro" id="IPR004412">
    <property type="entry name" value="GatA"/>
</dbReference>
<dbReference type="NCBIfam" id="TIGR00132">
    <property type="entry name" value="gatA"/>
    <property type="match status" value="1"/>
</dbReference>
<dbReference type="PANTHER" id="PTHR11895:SF151">
    <property type="entry name" value="GLUTAMYL-TRNA(GLN) AMIDOTRANSFERASE SUBUNIT A"/>
    <property type="match status" value="1"/>
</dbReference>
<dbReference type="PANTHER" id="PTHR11895">
    <property type="entry name" value="TRANSAMIDASE"/>
    <property type="match status" value="1"/>
</dbReference>
<dbReference type="Pfam" id="PF01425">
    <property type="entry name" value="Amidase"/>
    <property type="match status" value="1"/>
</dbReference>
<dbReference type="SUPFAM" id="SSF75304">
    <property type="entry name" value="Amidase signature (AS) enzymes"/>
    <property type="match status" value="1"/>
</dbReference>
<dbReference type="PROSITE" id="PS00571">
    <property type="entry name" value="AMIDASES"/>
    <property type="match status" value="1"/>
</dbReference>
<sequence>MSFNNQSIDQLHDFLVKKEISATELTKATLEDIHAREQAVGSFITISDEMAIAQAKEIDDKGIDADNVMSGIPLAVKDNISTKGILTTAASKMLYNYEPIFDATAVEKLYAKDMIVIGKANMDEFAMGGSTETSYFKKTNNAWDHSKVPGGSSGGSAAAVASGQVRLSLGSDTGGSIRQPASFNGIVGMKPTYGRVSRFGLFAFGSSLDQIGPMSQTVKENAQLLTVISGHDVRDSTSSERTVGDFTAKIGQDIQGMKIALPKEYLGEGIAQGVKETIIKAAKHLEKLGAVIEEVSLPHSKYGVAVYYIVASSEASSNLQRFDGIRYGYRTENYKNLDDIYVNTRSEGFGDEVKRRIMLGTFSLSSGYYDAYYKKAGQVRSLIIQDFEKVFADYDLILGPTAPTTAFDLDSLNHDPVAMYLADILTIPVNLAGLPGISIPAGFDQGLPVGMQLIGPKFSEETIYQVAAAFEATTDYHKQQPKIFGGEN</sequence>
<feature type="chain" id="PRO_0000241158" description="Glutamyl-tRNA(Gln) amidotransferase subunit A">
    <location>
        <begin position="1"/>
        <end position="488"/>
    </location>
</feature>
<feature type="active site" description="Charge relay system" evidence="1">
    <location>
        <position position="77"/>
    </location>
</feature>
<feature type="active site" description="Charge relay system" evidence="1">
    <location>
        <position position="152"/>
    </location>
</feature>
<feature type="active site" description="Acyl-ester intermediate" evidence="1">
    <location>
        <position position="176"/>
    </location>
</feature>
<keyword id="KW-0067">ATP-binding</keyword>
<keyword id="KW-0436">Ligase</keyword>
<keyword id="KW-0547">Nucleotide-binding</keyword>
<keyword id="KW-0648">Protein biosynthesis</keyword>
<comment type="function">
    <text evidence="1">Allows the formation of correctly charged Gln-tRNA(Gln) through the transamidation of misacylated Glu-tRNA(Gln) in organisms which lack glutaminyl-tRNA synthetase. The reaction takes place in the presence of glutamine and ATP through an activated gamma-phospho-Glu-tRNA(Gln).</text>
</comment>
<comment type="catalytic activity">
    <reaction evidence="1">
        <text>L-glutamyl-tRNA(Gln) + L-glutamine + ATP + H2O = L-glutaminyl-tRNA(Gln) + L-glutamate + ADP + phosphate + H(+)</text>
        <dbReference type="Rhea" id="RHEA:17521"/>
        <dbReference type="Rhea" id="RHEA-COMP:9681"/>
        <dbReference type="Rhea" id="RHEA-COMP:9684"/>
        <dbReference type="ChEBI" id="CHEBI:15377"/>
        <dbReference type="ChEBI" id="CHEBI:15378"/>
        <dbReference type="ChEBI" id="CHEBI:29985"/>
        <dbReference type="ChEBI" id="CHEBI:30616"/>
        <dbReference type="ChEBI" id="CHEBI:43474"/>
        <dbReference type="ChEBI" id="CHEBI:58359"/>
        <dbReference type="ChEBI" id="CHEBI:78520"/>
        <dbReference type="ChEBI" id="CHEBI:78521"/>
        <dbReference type="ChEBI" id="CHEBI:456216"/>
        <dbReference type="EC" id="6.3.5.7"/>
    </reaction>
</comment>
<comment type="subunit">
    <text evidence="1">Heterotrimer of A, B and C subunits.</text>
</comment>
<comment type="similarity">
    <text evidence="1">Belongs to the amidase family. GatA subfamily.</text>
</comment>
<name>GATA_STRA1</name>
<reference key="1">
    <citation type="journal article" date="2005" name="Proc. Natl. Acad. Sci. U.S.A.">
        <title>Genome analysis of multiple pathogenic isolates of Streptococcus agalactiae: implications for the microbial 'pan-genome'.</title>
        <authorList>
            <person name="Tettelin H."/>
            <person name="Masignani V."/>
            <person name="Cieslewicz M.J."/>
            <person name="Donati C."/>
            <person name="Medini D."/>
            <person name="Ward N.L."/>
            <person name="Angiuoli S.V."/>
            <person name="Crabtree J."/>
            <person name="Jones A.L."/>
            <person name="Durkin A.S."/>
            <person name="DeBoy R.T."/>
            <person name="Davidsen T.M."/>
            <person name="Mora M."/>
            <person name="Scarselli M."/>
            <person name="Margarit y Ros I."/>
            <person name="Peterson J.D."/>
            <person name="Hauser C.R."/>
            <person name="Sundaram J.P."/>
            <person name="Nelson W.C."/>
            <person name="Madupu R."/>
            <person name="Brinkac L.M."/>
            <person name="Dodson R.J."/>
            <person name="Rosovitz M.J."/>
            <person name="Sullivan S.A."/>
            <person name="Daugherty S.C."/>
            <person name="Haft D.H."/>
            <person name="Selengut J."/>
            <person name="Gwinn M.L."/>
            <person name="Zhou L."/>
            <person name="Zafar N."/>
            <person name="Khouri H."/>
            <person name="Radune D."/>
            <person name="Dimitrov G."/>
            <person name="Watkins K."/>
            <person name="O'Connor K.J."/>
            <person name="Smith S."/>
            <person name="Utterback T.R."/>
            <person name="White O."/>
            <person name="Rubens C.E."/>
            <person name="Grandi G."/>
            <person name="Madoff L.C."/>
            <person name="Kasper D.L."/>
            <person name="Telford J.L."/>
            <person name="Wessels M.R."/>
            <person name="Rappuoli R."/>
            <person name="Fraser C.M."/>
        </authorList>
    </citation>
    <scope>NUCLEOTIDE SEQUENCE [LARGE SCALE GENOMIC DNA]</scope>
    <source>
        <strain>ATCC 27591 / A909 / CDC SS700</strain>
    </source>
</reference>
<proteinExistence type="inferred from homology"/>
<organism>
    <name type="scientific">Streptococcus agalactiae serotype Ia (strain ATCC 27591 / A909 / CDC SS700)</name>
    <dbReference type="NCBI Taxonomy" id="205921"/>
    <lineage>
        <taxon>Bacteria</taxon>
        <taxon>Bacillati</taxon>
        <taxon>Bacillota</taxon>
        <taxon>Bacilli</taxon>
        <taxon>Lactobacillales</taxon>
        <taxon>Streptococcaceae</taxon>
        <taxon>Streptococcus</taxon>
    </lineage>
</organism>
<gene>
    <name evidence="1" type="primary">gatA</name>
    <name type="ordered locus">SAK_1680</name>
</gene>